<proteinExistence type="inferred from homology"/>
<name>RTCA_ECO5E</name>
<sequence length="342" mass="36332">MKRMIALDGAQGEGGGQIMRSALSLSMITGQPFTITGIRAGRAKPGLLRQHLTAVKAATEICGATVEGAELGSQRLVFRPGTVRGGDYRFAIGSAGSCTLVLQTVLPALWFADGPSRVEVSGGTDNPSAPPADFIRRVLEPLLAKIGIHQQTTLLRHGFYPAGGGVVATEVSPVASFNTLQLGERGNIVQMRGEVLLAGVPRHVAEREIATLAASFSLHEQNIHNLPRDQGPGNTVSLEVESENITERFFVVGEKRVSAEVVAAQLVKEVKRYLASPAAVGEYLADQLVLPMALAGAGQFTVAHPSCHLLTNIAVVERFLPVRFTLAETDGVTRVMITKLTD</sequence>
<organism>
    <name type="scientific">Escherichia coli O157:H7 (strain EC4115 / EHEC)</name>
    <dbReference type="NCBI Taxonomy" id="444450"/>
    <lineage>
        <taxon>Bacteria</taxon>
        <taxon>Pseudomonadati</taxon>
        <taxon>Pseudomonadota</taxon>
        <taxon>Gammaproteobacteria</taxon>
        <taxon>Enterobacterales</taxon>
        <taxon>Enterobacteriaceae</taxon>
        <taxon>Escherichia</taxon>
    </lineage>
</organism>
<gene>
    <name evidence="1" type="primary">rtcA</name>
    <name type="ordered locus">ECH74115_4728</name>
</gene>
<comment type="function">
    <text evidence="1">Catalyzes the conversion of 3'-phosphate to a 2',3'-cyclic phosphodiester at the end of RNA. The mechanism of action of the enzyme occurs in 3 steps: (A) adenylation of the enzyme by ATP; (B) transfer of adenylate to an RNA-N3'P to produce RNA-N3'PP5'A; (C) and attack of the adjacent 2'-hydroxyl on the 3'-phosphorus in the diester linkage to produce the cyclic end product. The biological role of this enzyme is unknown but it is likely to function in some aspects of cellular RNA processing.</text>
</comment>
<comment type="catalytic activity">
    <reaction evidence="1">
        <text>a 3'-end 3'-phospho-ribonucleotide-RNA + ATP = a 3'-end 2',3'-cyclophospho-ribonucleotide-RNA + AMP + diphosphate</text>
        <dbReference type="Rhea" id="RHEA:23976"/>
        <dbReference type="Rhea" id="RHEA-COMP:10463"/>
        <dbReference type="Rhea" id="RHEA-COMP:10464"/>
        <dbReference type="ChEBI" id="CHEBI:30616"/>
        <dbReference type="ChEBI" id="CHEBI:33019"/>
        <dbReference type="ChEBI" id="CHEBI:83062"/>
        <dbReference type="ChEBI" id="CHEBI:83064"/>
        <dbReference type="ChEBI" id="CHEBI:456215"/>
        <dbReference type="EC" id="6.5.1.4"/>
    </reaction>
</comment>
<comment type="subcellular location">
    <subcellularLocation>
        <location evidence="1">Cytoplasm</location>
    </subcellularLocation>
</comment>
<comment type="similarity">
    <text evidence="1">Belongs to the RNA 3'-terminal cyclase family. Type 1 subfamily.</text>
</comment>
<evidence type="ECO:0000255" key="1">
    <source>
        <dbReference type="HAMAP-Rule" id="MF_00200"/>
    </source>
</evidence>
<reference key="1">
    <citation type="journal article" date="2011" name="Proc. Natl. Acad. Sci. U.S.A.">
        <title>Genomic anatomy of Escherichia coli O157:H7 outbreaks.</title>
        <authorList>
            <person name="Eppinger M."/>
            <person name="Mammel M.K."/>
            <person name="Leclerc J.E."/>
            <person name="Ravel J."/>
            <person name="Cebula T.A."/>
        </authorList>
    </citation>
    <scope>NUCLEOTIDE SEQUENCE [LARGE SCALE GENOMIC DNA]</scope>
    <source>
        <strain>EC4115 / EHEC</strain>
    </source>
</reference>
<protein>
    <recommendedName>
        <fullName evidence="1">RNA 3'-terminal phosphate cyclase</fullName>
        <shortName evidence="1">RNA cyclase</shortName>
        <shortName evidence="1">RNA-3'-phosphate cyclase</shortName>
        <ecNumber evidence="1">6.5.1.4</ecNumber>
    </recommendedName>
</protein>
<keyword id="KW-0067">ATP-binding</keyword>
<keyword id="KW-0963">Cytoplasm</keyword>
<keyword id="KW-0436">Ligase</keyword>
<keyword id="KW-0547">Nucleotide-binding</keyword>
<dbReference type="EC" id="6.5.1.4" evidence="1"/>
<dbReference type="EMBL" id="CP001164">
    <property type="protein sequence ID" value="ACI38089.1"/>
    <property type="molecule type" value="Genomic_DNA"/>
</dbReference>
<dbReference type="RefSeq" id="WP_000827117.1">
    <property type="nucleotide sequence ID" value="NC_011353.1"/>
</dbReference>
<dbReference type="SMR" id="B5YTX2"/>
<dbReference type="KEGG" id="ecf:ECH74115_4728"/>
<dbReference type="HOGENOM" id="CLU_027882_0_0_6"/>
<dbReference type="GO" id="GO:0005737">
    <property type="term" value="C:cytoplasm"/>
    <property type="evidence" value="ECO:0007669"/>
    <property type="project" value="UniProtKB-SubCell"/>
</dbReference>
<dbReference type="GO" id="GO:0005524">
    <property type="term" value="F:ATP binding"/>
    <property type="evidence" value="ECO:0007669"/>
    <property type="project" value="UniProtKB-KW"/>
</dbReference>
<dbReference type="GO" id="GO:0003963">
    <property type="term" value="F:RNA-3'-phosphate cyclase activity"/>
    <property type="evidence" value="ECO:0007669"/>
    <property type="project" value="UniProtKB-UniRule"/>
</dbReference>
<dbReference type="GO" id="GO:0006396">
    <property type="term" value="P:RNA processing"/>
    <property type="evidence" value="ECO:0007669"/>
    <property type="project" value="InterPro"/>
</dbReference>
<dbReference type="FunFam" id="3.65.10.20:FF:000002">
    <property type="entry name" value="GM19193"/>
    <property type="match status" value="1"/>
</dbReference>
<dbReference type="FunFam" id="3.30.360.20:FF:000003">
    <property type="entry name" value="RNA 3'-terminal phosphate cyclase"/>
    <property type="match status" value="1"/>
</dbReference>
<dbReference type="Gene3D" id="3.65.10.20">
    <property type="entry name" value="RNA 3'-terminal phosphate cyclase domain"/>
    <property type="match status" value="1"/>
</dbReference>
<dbReference type="Gene3D" id="3.30.360.20">
    <property type="entry name" value="RNA 3'-terminal phosphate cyclase, insert domain"/>
    <property type="match status" value="1"/>
</dbReference>
<dbReference type="HAMAP" id="MF_00200">
    <property type="entry name" value="RTC"/>
    <property type="match status" value="1"/>
</dbReference>
<dbReference type="InterPro" id="IPR013791">
    <property type="entry name" value="RNA3'-term_phos_cycl_insert"/>
</dbReference>
<dbReference type="InterPro" id="IPR023797">
    <property type="entry name" value="RNA3'_phos_cyclase_dom"/>
</dbReference>
<dbReference type="InterPro" id="IPR037136">
    <property type="entry name" value="RNA3'_phos_cyclase_dom_sf"/>
</dbReference>
<dbReference type="InterPro" id="IPR000228">
    <property type="entry name" value="RNA3'_term_phos_cyc"/>
</dbReference>
<dbReference type="InterPro" id="IPR017770">
    <property type="entry name" value="RNA3'_term_phos_cyc_type_1"/>
</dbReference>
<dbReference type="InterPro" id="IPR020719">
    <property type="entry name" value="RNA3'_term_phos_cycl-like_CS"/>
</dbReference>
<dbReference type="InterPro" id="IPR013792">
    <property type="entry name" value="RNA3'P_cycl/enolpyr_Trfase_a/b"/>
</dbReference>
<dbReference type="InterPro" id="IPR036553">
    <property type="entry name" value="RPTC_insert"/>
</dbReference>
<dbReference type="NCBIfam" id="NF003246">
    <property type="entry name" value="PRK04204.1-2"/>
    <property type="match status" value="1"/>
</dbReference>
<dbReference type="NCBIfam" id="NF003247">
    <property type="entry name" value="PRK04204.1-3"/>
    <property type="match status" value="1"/>
</dbReference>
<dbReference type="NCBIfam" id="TIGR03399">
    <property type="entry name" value="RNA_3prim_cycl"/>
    <property type="match status" value="1"/>
</dbReference>
<dbReference type="PANTHER" id="PTHR11096">
    <property type="entry name" value="RNA 3' TERMINAL PHOSPHATE CYCLASE"/>
    <property type="match status" value="1"/>
</dbReference>
<dbReference type="PANTHER" id="PTHR11096:SF0">
    <property type="entry name" value="RNA 3'-TERMINAL PHOSPHATE CYCLASE"/>
    <property type="match status" value="1"/>
</dbReference>
<dbReference type="Pfam" id="PF01137">
    <property type="entry name" value="RTC"/>
    <property type="match status" value="1"/>
</dbReference>
<dbReference type="Pfam" id="PF05189">
    <property type="entry name" value="RTC_insert"/>
    <property type="match status" value="1"/>
</dbReference>
<dbReference type="PIRSF" id="PIRSF005378">
    <property type="entry name" value="RNA3'_term_phos_cycl_euk"/>
    <property type="match status" value="1"/>
</dbReference>
<dbReference type="SUPFAM" id="SSF55205">
    <property type="entry name" value="EPT/RTPC-like"/>
    <property type="match status" value="2"/>
</dbReference>
<dbReference type="SUPFAM" id="SSF52913">
    <property type="entry name" value="RNA 3'-terminal phosphate cyclase, RPTC, insert domain"/>
    <property type="match status" value="1"/>
</dbReference>
<dbReference type="PROSITE" id="PS01287">
    <property type="entry name" value="RTC"/>
    <property type="match status" value="1"/>
</dbReference>
<feature type="chain" id="PRO_1000099346" description="RNA 3'-terminal phosphate cyclase">
    <location>
        <begin position="1"/>
        <end position="342"/>
    </location>
</feature>
<feature type="active site" description="Tele-AMP-histidine intermediate" evidence="1">
    <location>
        <position position="308"/>
    </location>
</feature>
<feature type="binding site" evidence="1">
    <location>
        <position position="103"/>
    </location>
    <ligand>
        <name>ATP</name>
        <dbReference type="ChEBI" id="CHEBI:30616"/>
    </ligand>
</feature>
<feature type="binding site" evidence="1">
    <location>
        <begin position="283"/>
        <end position="287"/>
    </location>
    <ligand>
        <name>ATP</name>
        <dbReference type="ChEBI" id="CHEBI:30616"/>
    </ligand>
</feature>
<accession>B5YTX2</accession>